<reference key="1">
    <citation type="journal article" date="2008" name="J. Bacteriol.">
        <title>Genome sequence of Lactobacillus helveticus: an organism distinguished by selective gene loss and IS element expansion.</title>
        <authorList>
            <person name="Callanan M."/>
            <person name="Kaleta P."/>
            <person name="O'Callaghan J."/>
            <person name="O'Sullivan O."/>
            <person name="Jordan K."/>
            <person name="McAuliffe O."/>
            <person name="Sangrador-Vegas A."/>
            <person name="Slattery L."/>
            <person name="Fitzgerald G.F."/>
            <person name="Beresford T."/>
            <person name="Ross R.P."/>
        </authorList>
    </citation>
    <scope>NUCLEOTIDE SEQUENCE [LARGE SCALE GENOMIC DNA]</scope>
    <source>
        <strain>DPC 4571</strain>
    </source>
</reference>
<gene>
    <name evidence="1" type="primary">hslO</name>
    <name type="ordered locus">lhv_0297</name>
</gene>
<accession>A8YXJ3</accession>
<name>HSLO_LACH4</name>
<feature type="chain" id="PRO_1000071358" description="33 kDa chaperonin">
    <location>
        <begin position="1"/>
        <end position="296"/>
    </location>
</feature>
<feature type="disulfide bond" description="Redox-active" evidence="1">
    <location>
        <begin position="236"/>
        <end position="238"/>
    </location>
</feature>
<feature type="disulfide bond" description="Redox-active" evidence="1">
    <location>
        <begin position="269"/>
        <end position="272"/>
    </location>
</feature>
<dbReference type="EMBL" id="CP000517">
    <property type="protein sequence ID" value="ABX26524.1"/>
    <property type="molecule type" value="Genomic_DNA"/>
</dbReference>
<dbReference type="RefSeq" id="WP_003625760.1">
    <property type="nucleotide sequence ID" value="NC_010080.1"/>
</dbReference>
<dbReference type="SMR" id="A8YXJ3"/>
<dbReference type="KEGG" id="lhe:lhv_0297"/>
<dbReference type="eggNOG" id="COG1281">
    <property type="taxonomic scope" value="Bacteria"/>
</dbReference>
<dbReference type="HOGENOM" id="CLU_054493_1_0_9"/>
<dbReference type="Proteomes" id="UP000000790">
    <property type="component" value="Chromosome"/>
</dbReference>
<dbReference type="GO" id="GO:0005737">
    <property type="term" value="C:cytoplasm"/>
    <property type="evidence" value="ECO:0007669"/>
    <property type="project" value="UniProtKB-SubCell"/>
</dbReference>
<dbReference type="GO" id="GO:0044183">
    <property type="term" value="F:protein folding chaperone"/>
    <property type="evidence" value="ECO:0007669"/>
    <property type="project" value="TreeGrafter"/>
</dbReference>
<dbReference type="GO" id="GO:0051082">
    <property type="term" value="F:unfolded protein binding"/>
    <property type="evidence" value="ECO:0007669"/>
    <property type="project" value="UniProtKB-UniRule"/>
</dbReference>
<dbReference type="GO" id="GO:0042026">
    <property type="term" value="P:protein refolding"/>
    <property type="evidence" value="ECO:0007669"/>
    <property type="project" value="TreeGrafter"/>
</dbReference>
<dbReference type="CDD" id="cd00498">
    <property type="entry name" value="Hsp33"/>
    <property type="match status" value="1"/>
</dbReference>
<dbReference type="Gene3D" id="3.55.30.10">
    <property type="entry name" value="Hsp33 domain"/>
    <property type="match status" value="1"/>
</dbReference>
<dbReference type="Gene3D" id="3.90.1280.10">
    <property type="entry name" value="HSP33 redox switch-like"/>
    <property type="match status" value="1"/>
</dbReference>
<dbReference type="HAMAP" id="MF_00117">
    <property type="entry name" value="HslO"/>
    <property type="match status" value="1"/>
</dbReference>
<dbReference type="InterPro" id="IPR000397">
    <property type="entry name" value="Heat_shock_Hsp33"/>
</dbReference>
<dbReference type="InterPro" id="IPR016154">
    <property type="entry name" value="Heat_shock_Hsp33_C"/>
</dbReference>
<dbReference type="InterPro" id="IPR016153">
    <property type="entry name" value="Heat_shock_Hsp33_N"/>
</dbReference>
<dbReference type="NCBIfam" id="NF001033">
    <property type="entry name" value="PRK00114.1"/>
    <property type="match status" value="1"/>
</dbReference>
<dbReference type="PANTHER" id="PTHR30111">
    <property type="entry name" value="33 KDA CHAPERONIN"/>
    <property type="match status" value="1"/>
</dbReference>
<dbReference type="PANTHER" id="PTHR30111:SF1">
    <property type="entry name" value="33 KDA CHAPERONIN"/>
    <property type="match status" value="1"/>
</dbReference>
<dbReference type="Pfam" id="PF01430">
    <property type="entry name" value="HSP33"/>
    <property type="match status" value="1"/>
</dbReference>
<dbReference type="PIRSF" id="PIRSF005261">
    <property type="entry name" value="Heat_shock_Hsp33"/>
    <property type="match status" value="1"/>
</dbReference>
<dbReference type="SUPFAM" id="SSF64397">
    <property type="entry name" value="Hsp33 domain"/>
    <property type="match status" value="1"/>
</dbReference>
<dbReference type="SUPFAM" id="SSF118352">
    <property type="entry name" value="HSP33 redox switch-like"/>
    <property type="match status" value="1"/>
</dbReference>
<proteinExistence type="inferred from homology"/>
<evidence type="ECO:0000255" key="1">
    <source>
        <dbReference type="HAMAP-Rule" id="MF_00117"/>
    </source>
</evidence>
<keyword id="KW-0143">Chaperone</keyword>
<keyword id="KW-0963">Cytoplasm</keyword>
<keyword id="KW-1015">Disulfide bond</keyword>
<keyword id="KW-0676">Redox-active center</keyword>
<keyword id="KW-0346">Stress response</keyword>
<keyword id="KW-0862">Zinc</keyword>
<organism>
    <name type="scientific">Lactobacillus helveticus (strain DPC 4571)</name>
    <dbReference type="NCBI Taxonomy" id="405566"/>
    <lineage>
        <taxon>Bacteria</taxon>
        <taxon>Bacillati</taxon>
        <taxon>Bacillota</taxon>
        <taxon>Bacilli</taxon>
        <taxon>Lactobacillales</taxon>
        <taxon>Lactobacillaceae</taxon>
        <taxon>Lactobacillus</taxon>
    </lineage>
</organism>
<sequence>MSDYLVKSIDKTKNLRLLTITAKDVVGEAQKRHDLWSASAAVLGRTLVGSLLLAGAELTDKEELTVRLLGNGPVGPTIVTAMSDLKVKGYVKNPHIALSPKKNGHIDVKKAVGQGMLEVTKDLGLKEPYTGQVPIVSGEIAEDFAYYLTKSEQIPSAVGLSVFVNPNNSIGEAGGFMLQALPGASDALITETIKRIKALPALSTEFLDGMTPEDLARKILGTDCKILEKDDVAFSCDCSKEKYAGILETLKSSQLKAMINEDHGAELTCNFCGNKYHYTENELKDILAKKKEEKDY</sequence>
<comment type="function">
    <text evidence="1">Redox regulated molecular chaperone. Protects both thermally unfolding and oxidatively damaged proteins from irreversible aggregation. Plays an important role in the bacterial defense system toward oxidative stress.</text>
</comment>
<comment type="subcellular location">
    <subcellularLocation>
        <location evidence="1">Cytoplasm</location>
    </subcellularLocation>
</comment>
<comment type="PTM">
    <text evidence="1">Under oxidizing conditions two disulfide bonds are formed involving the reactive cysteines. Under reducing conditions zinc is bound to the reactive cysteines and the protein is inactive.</text>
</comment>
<comment type="similarity">
    <text evidence="1">Belongs to the HSP33 family.</text>
</comment>
<protein>
    <recommendedName>
        <fullName evidence="1">33 kDa chaperonin</fullName>
    </recommendedName>
    <alternativeName>
        <fullName evidence="1">Heat shock protein 33 homolog</fullName>
        <shortName evidence="1">HSP33</shortName>
    </alternativeName>
</protein>